<evidence type="ECO:0000255" key="1">
    <source>
        <dbReference type="HAMAP-Rule" id="MF_01803"/>
    </source>
</evidence>
<name>MUKF_ECOL6</name>
<dbReference type="EMBL" id="AE014075">
    <property type="protein sequence ID" value="AAN79532.1"/>
    <property type="molecule type" value="Genomic_DNA"/>
</dbReference>
<dbReference type="RefSeq" id="WP_001288856.1">
    <property type="nucleotide sequence ID" value="NZ_CP051263.1"/>
</dbReference>
<dbReference type="SMR" id="Q8FJA4"/>
<dbReference type="STRING" id="199310.c1064"/>
<dbReference type="KEGG" id="ecc:c1064"/>
<dbReference type="eggNOG" id="COG3006">
    <property type="taxonomic scope" value="Bacteria"/>
</dbReference>
<dbReference type="HOGENOM" id="CLU_049853_0_0_6"/>
<dbReference type="BioCyc" id="ECOL199310:C1064-MONOMER"/>
<dbReference type="Proteomes" id="UP000001410">
    <property type="component" value="Chromosome"/>
</dbReference>
<dbReference type="GO" id="GO:0005737">
    <property type="term" value="C:cytoplasm"/>
    <property type="evidence" value="ECO:0007669"/>
    <property type="project" value="UniProtKB-UniRule"/>
</dbReference>
<dbReference type="GO" id="GO:0009295">
    <property type="term" value="C:nucleoid"/>
    <property type="evidence" value="ECO:0007669"/>
    <property type="project" value="UniProtKB-SubCell"/>
</dbReference>
<dbReference type="GO" id="GO:0005509">
    <property type="term" value="F:calcium ion binding"/>
    <property type="evidence" value="ECO:0007669"/>
    <property type="project" value="UniProtKB-UniRule"/>
</dbReference>
<dbReference type="GO" id="GO:0051301">
    <property type="term" value="P:cell division"/>
    <property type="evidence" value="ECO:0007669"/>
    <property type="project" value="UniProtKB-KW"/>
</dbReference>
<dbReference type="GO" id="GO:0030261">
    <property type="term" value="P:chromosome condensation"/>
    <property type="evidence" value="ECO:0007669"/>
    <property type="project" value="UniProtKB-KW"/>
</dbReference>
<dbReference type="GO" id="GO:0007059">
    <property type="term" value="P:chromosome segregation"/>
    <property type="evidence" value="ECO:0007669"/>
    <property type="project" value="UniProtKB-UniRule"/>
</dbReference>
<dbReference type="GO" id="GO:0006260">
    <property type="term" value="P:DNA replication"/>
    <property type="evidence" value="ECO:0007669"/>
    <property type="project" value="UniProtKB-UniRule"/>
</dbReference>
<dbReference type="CDD" id="cd16337">
    <property type="entry name" value="MukF_C"/>
    <property type="match status" value="1"/>
</dbReference>
<dbReference type="CDD" id="cd16335">
    <property type="entry name" value="MukF_N"/>
    <property type="match status" value="1"/>
</dbReference>
<dbReference type="Gene3D" id="1.20.58.590">
    <property type="entry name" value="Chromosome partition protein MukF, middle domain"/>
    <property type="match status" value="1"/>
</dbReference>
<dbReference type="Gene3D" id="1.10.225.40">
    <property type="entry name" value="MukF, C-terminal domain"/>
    <property type="match status" value="1"/>
</dbReference>
<dbReference type="Gene3D" id="1.10.10.10">
    <property type="entry name" value="Winged helix-like DNA-binding domain superfamily/Winged helix DNA-binding domain"/>
    <property type="match status" value="1"/>
</dbReference>
<dbReference type="HAMAP" id="MF_01803">
    <property type="entry name" value="MukF"/>
    <property type="match status" value="1"/>
</dbReference>
<dbReference type="InterPro" id="IPR005582">
    <property type="entry name" value="Chromosome_partition_MukF"/>
</dbReference>
<dbReference type="InterPro" id="IPR033441">
    <property type="entry name" value="MukF_C"/>
</dbReference>
<dbReference type="InterPro" id="IPR038198">
    <property type="entry name" value="MukF_C_sf"/>
</dbReference>
<dbReference type="InterPro" id="IPR033440">
    <property type="entry name" value="MukF_M"/>
</dbReference>
<dbReference type="InterPro" id="IPR036141">
    <property type="entry name" value="MukF_M_sp"/>
</dbReference>
<dbReference type="InterPro" id="IPR033439">
    <property type="entry name" value="MukF_WHTH"/>
</dbReference>
<dbReference type="InterPro" id="IPR036388">
    <property type="entry name" value="WH-like_DNA-bd_sf"/>
</dbReference>
<dbReference type="InterPro" id="IPR036390">
    <property type="entry name" value="WH_DNA-bd_sf"/>
</dbReference>
<dbReference type="NCBIfam" id="NF003615">
    <property type="entry name" value="PRK05260.1"/>
    <property type="match status" value="1"/>
</dbReference>
<dbReference type="Pfam" id="PF03882">
    <property type="entry name" value="KicB"/>
    <property type="match status" value="1"/>
</dbReference>
<dbReference type="Pfam" id="PF17193">
    <property type="entry name" value="MukF_C"/>
    <property type="match status" value="1"/>
</dbReference>
<dbReference type="Pfam" id="PF17192">
    <property type="entry name" value="MukF_M"/>
    <property type="match status" value="1"/>
</dbReference>
<dbReference type="PIRSF" id="PIRSF018282">
    <property type="entry name" value="MukF"/>
    <property type="match status" value="1"/>
</dbReference>
<dbReference type="SUPFAM" id="SSF140570">
    <property type="entry name" value="MukF C-terminal domain-like"/>
    <property type="match status" value="1"/>
</dbReference>
<dbReference type="SUPFAM" id="SSF46785">
    <property type="entry name" value="Winged helix' DNA-binding domain"/>
    <property type="match status" value="1"/>
</dbReference>
<keyword id="KW-0106">Calcium</keyword>
<keyword id="KW-0131">Cell cycle</keyword>
<keyword id="KW-0132">Cell division</keyword>
<keyword id="KW-0159">Chromosome partition</keyword>
<keyword id="KW-0963">Cytoplasm</keyword>
<keyword id="KW-0226">DNA condensation</keyword>
<keyword id="KW-1185">Reference proteome</keyword>
<accession>Q8FJA4</accession>
<organism>
    <name type="scientific">Escherichia coli O6:H1 (strain CFT073 / ATCC 700928 / UPEC)</name>
    <dbReference type="NCBI Taxonomy" id="199310"/>
    <lineage>
        <taxon>Bacteria</taxon>
        <taxon>Pseudomonadati</taxon>
        <taxon>Pseudomonadota</taxon>
        <taxon>Gammaproteobacteria</taxon>
        <taxon>Enterobacterales</taxon>
        <taxon>Enterobacteriaceae</taxon>
        <taxon>Escherichia</taxon>
    </lineage>
</organism>
<reference key="1">
    <citation type="journal article" date="2002" name="Proc. Natl. Acad. Sci. U.S.A.">
        <title>Extensive mosaic structure revealed by the complete genome sequence of uropathogenic Escherichia coli.</title>
        <authorList>
            <person name="Welch R.A."/>
            <person name="Burland V."/>
            <person name="Plunkett G. III"/>
            <person name="Redford P."/>
            <person name="Roesch P."/>
            <person name="Rasko D."/>
            <person name="Buckles E.L."/>
            <person name="Liou S.-R."/>
            <person name="Boutin A."/>
            <person name="Hackett J."/>
            <person name="Stroud D."/>
            <person name="Mayhew G.F."/>
            <person name="Rose D.J."/>
            <person name="Zhou S."/>
            <person name="Schwartz D.C."/>
            <person name="Perna N.T."/>
            <person name="Mobley H.L.T."/>
            <person name="Donnenberg M.S."/>
            <person name="Blattner F.R."/>
        </authorList>
    </citation>
    <scope>NUCLEOTIDE SEQUENCE [LARGE SCALE GENOMIC DNA]</scope>
    <source>
        <strain>CFT073 / ATCC 700928 / UPEC</strain>
    </source>
</reference>
<protein>
    <recommendedName>
        <fullName evidence="1">Chromosome partition protein MukF</fullName>
    </recommendedName>
</protein>
<gene>
    <name evidence="1" type="primary">mukF</name>
    <name type="ordered locus">c1064</name>
</gene>
<proteinExistence type="inferred from homology"/>
<comment type="function">
    <text evidence="1">Involved in chromosome condensation, segregation and cell cycle progression. May participate in facilitating chromosome segregation by condensation DNA from both sides of a centrally located replisome during cell division. Not required for mini-F plasmid partitioning. Probably acts via its interaction with MukB and MukE. Overexpression results in anucleate cells. It has a calcium binding activity.</text>
</comment>
<comment type="subunit">
    <text evidence="1">Interacts, and probably forms a ternary complex, with MukE and MukB via its C-terminal region. The complex formation is stimulated by calcium or magnesium. It is required for an interaction between MukE and MukB.</text>
</comment>
<comment type="subcellular location">
    <subcellularLocation>
        <location evidence="1">Cytoplasm</location>
        <location evidence="1">Nucleoid</location>
    </subcellularLocation>
    <text evidence="1">Restricted to the nucleoid region.</text>
</comment>
<comment type="similarity">
    <text evidence="1">Belongs to the MukF family.</text>
</comment>
<sequence>MSEFSQTVPELVAWARKNDFSISLPVDRLSFLLAVATLNGERLDGEMSEGELVDAFRHVSDAFEQTSETIGVRANNAINDMVRQRLLNRFTSEQAEGNAIYRLTPLGIGITDYYIRQREFSTLRLSMQLSIVAGELKRAADAAEEGGDEFHWHRNVYAPLKYSVAEIFDSIDLTQRLMDEQQQQVKDDIAQLLNKDWRAAISSCELLLSETSGTLRELQDTLEAAGDKLQANLLRIQDATMTHDDLHFVDRLVFDLQSKLDRIISWGQQSIDLWIGYDRHVHKFIRTAIDMDKNRVFAQRLRQSVQTYFDEPWALTYANADRLLDMRDEEMVLRDEEVTGELPEDLEYEEFNEIREQLAAIIEEQLAVYKTRQVPLDLGLVVREYLSQYPRARHFDVARIVIDQAVRLGVAQADFTGLPAKWQPINDYGAKVQAHVIDKY</sequence>
<feature type="chain" id="PRO_0000211601" description="Chromosome partition protein MukF">
    <location>
        <begin position="1"/>
        <end position="440"/>
    </location>
</feature>
<feature type="region of interest" description="Leucine-zipper">
    <location>
        <begin position="208"/>
        <end position="236"/>
    </location>
</feature>